<organism>
    <name type="scientific">Oceanobacillus iheyensis (strain DSM 14371 / CIP 107618 / JCM 11309 / KCTC 3954 / HTE831)</name>
    <dbReference type="NCBI Taxonomy" id="221109"/>
    <lineage>
        <taxon>Bacteria</taxon>
        <taxon>Bacillati</taxon>
        <taxon>Bacillota</taxon>
        <taxon>Bacilli</taxon>
        <taxon>Bacillales</taxon>
        <taxon>Bacillaceae</taxon>
        <taxon>Oceanobacillus</taxon>
    </lineage>
</organism>
<protein>
    <recommendedName>
        <fullName evidence="1">Holliday junction resolvase RecU</fullName>
        <ecNumber evidence="1">3.1.21.10</ecNumber>
    </recommendedName>
    <alternativeName>
        <fullName evidence="1">Recombination protein U homolog</fullName>
    </alternativeName>
</protein>
<proteinExistence type="inferred from homology"/>
<comment type="function">
    <text evidence="1">Endonuclease that resolves Holliday junction intermediates in genetic recombination. Cleaves mobile four-strand junctions by introducing symmetrical nicks in paired strands. Promotes annealing of linear ssDNA with homologous dsDNA. Required for DNA repair, homologous recombination and chromosome segregation.</text>
</comment>
<comment type="catalytic activity">
    <reaction evidence="1">
        <text>Endonucleolytic cleavage at a junction such as a reciprocal single-stranded crossover between two homologous DNA duplexes (Holliday junction).</text>
        <dbReference type="EC" id="3.1.21.10"/>
    </reaction>
</comment>
<comment type="cofactor">
    <cofactor evidence="1">
        <name>Mg(2+)</name>
        <dbReference type="ChEBI" id="CHEBI:18420"/>
    </cofactor>
    <text evidence="1">Binds 1 Mg(2+) ion per subunit.</text>
</comment>
<comment type="subcellular location">
    <subcellularLocation>
        <location evidence="1">Cytoplasm</location>
    </subcellularLocation>
</comment>
<comment type="similarity">
    <text evidence="1">Belongs to the RecU family.</text>
</comment>
<accession>Q8CXF9</accession>
<sequence>MNYPNGQQKVTTNHVVQKQDNRMFSNRGMSLEDDINATNEFYLETNQAVIHKKPTPVQIVNVHYPKRSAAVITEAYFKQASTTDYNGIYKGKYIDFEAKETKNKTSFPLANIHEHQINHMQKVIDQQGICFMLIRFTAHDETYLLDAKALLTFWNLKQDGGKKSIPYDMIRNQSQLIPFHYQKRVDYLAAVDKLYF</sequence>
<name>RECU_OCEIH</name>
<reference key="1">
    <citation type="journal article" date="2002" name="Nucleic Acids Res.">
        <title>Genome sequence of Oceanobacillus iheyensis isolated from the Iheya Ridge and its unexpected adaptive capabilities to extreme environments.</title>
        <authorList>
            <person name="Takami H."/>
            <person name="Takaki Y."/>
            <person name="Uchiyama I."/>
        </authorList>
    </citation>
    <scope>NUCLEOTIDE SEQUENCE [LARGE SCALE GENOMIC DNA]</scope>
    <source>
        <strain>DSM 14371 / CIP 107618 / JCM 11309 / KCTC 3954 / HTE831</strain>
    </source>
</reference>
<evidence type="ECO:0000255" key="1">
    <source>
        <dbReference type="HAMAP-Rule" id="MF_00130"/>
    </source>
</evidence>
<dbReference type="EC" id="3.1.21.10" evidence="1"/>
<dbReference type="EMBL" id="BA000028">
    <property type="protein sequence ID" value="BAC13711.1"/>
    <property type="molecule type" value="Genomic_DNA"/>
</dbReference>
<dbReference type="RefSeq" id="WP_011066154.1">
    <property type="nucleotide sequence ID" value="NC_004193.1"/>
</dbReference>
<dbReference type="SMR" id="Q8CXF9"/>
<dbReference type="STRING" id="221109.gene:10733995"/>
<dbReference type="KEGG" id="oih:OB1755"/>
<dbReference type="eggNOG" id="COG3331">
    <property type="taxonomic scope" value="Bacteria"/>
</dbReference>
<dbReference type="HOGENOM" id="CLU_096340_0_0_9"/>
<dbReference type="OrthoDB" id="9783592at2"/>
<dbReference type="PhylomeDB" id="Q8CXF9"/>
<dbReference type="Proteomes" id="UP000000822">
    <property type="component" value="Chromosome"/>
</dbReference>
<dbReference type="GO" id="GO:0005737">
    <property type="term" value="C:cytoplasm"/>
    <property type="evidence" value="ECO:0007669"/>
    <property type="project" value="UniProtKB-SubCell"/>
</dbReference>
<dbReference type="GO" id="GO:0004519">
    <property type="term" value="F:endonuclease activity"/>
    <property type="evidence" value="ECO:0007669"/>
    <property type="project" value="UniProtKB-UniRule"/>
</dbReference>
<dbReference type="GO" id="GO:0000287">
    <property type="term" value="F:magnesium ion binding"/>
    <property type="evidence" value="ECO:0007669"/>
    <property type="project" value="UniProtKB-UniRule"/>
</dbReference>
<dbReference type="GO" id="GO:0003676">
    <property type="term" value="F:nucleic acid binding"/>
    <property type="evidence" value="ECO:0007669"/>
    <property type="project" value="InterPro"/>
</dbReference>
<dbReference type="GO" id="GO:0007059">
    <property type="term" value="P:chromosome segregation"/>
    <property type="evidence" value="ECO:0007669"/>
    <property type="project" value="UniProtKB-UniRule"/>
</dbReference>
<dbReference type="GO" id="GO:0006310">
    <property type="term" value="P:DNA recombination"/>
    <property type="evidence" value="ECO:0007669"/>
    <property type="project" value="UniProtKB-UniRule"/>
</dbReference>
<dbReference type="GO" id="GO:0006281">
    <property type="term" value="P:DNA repair"/>
    <property type="evidence" value="ECO:0007669"/>
    <property type="project" value="UniProtKB-UniRule"/>
</dbReference>
<dbReference type="CDD" id="cd22354">
    <property type="entry name" value="RecU-like"/>
    <property type="match status" value="1"/>
</dbReference>
<dbReference type="Gene3D" id="3.40.1350.10">
    <property type="match status" value="1"/>
</dbReference>
<dbReference type="HAMAP" id="MF_00130">
    <property type="entry name" value="RecU"/>
    <property type="match status" value="1"/>
</dbReference>
<dbReference type="InterPro" id="IPR004612">
    <property type="entry name" value="Resolv_RecU"/>
</dbReference>
<dbReference type="InterPro" id="IPR011335">
    <property type="entry name" value="Restrct_endonuc-II-like"/>
</dbReference>
<dbReference type="InterPro" id="IPR011856">
    <property type="entry name" value="tRNA_endonuc-like_dom_sf"/>
</dbReference>
<dbReference type="NCBIfam" id="NF002581">
    <property type="entry name" value="PRK02234.1-2"/>
    <property type="match status" value="1"/>
</dbReference>
<dbReference type="NCBIfam" id="NF002584">
    <property type="entry name" value="PRK02234.1-5"/>
    <property type="match status" value="1"/>
</dbReference>
<dbReference type="NCBIfam" id="TIGR00648">
    <property type="entry name" value="recU"/>
    <property type="match status" value="1"/>
</dbReference>
<dbReference type="Pfam" id="PF03838">
    <property type="entry name" value="RecU"/>
    <property type="match status" value="1"/>
</dbReference>
<dbReference type="PIRSF" id="PIRSF037785">
    <property type="entry name" value="RecU"/>
    <property type="match status" value="1"/>
</dbReference>
<dbReference type="SUPFAM" id="SSF52980">
    <property type="entry name" value="Restriction endonuclease-like"/>
    <property type="match status" value="1"/>
</dbReference>
<keyword id="KW-0963">Cytoplasm</keyword>
<keyword id="KW-0227">DNA damage</keyword>
<keyword id="KW-0233">DNA recombination</keyword>
<keyword id="KW-0234">DNA repair</keyword>
<keyword id="KW-0255">Endonuclease</keyword>
<keyword id="KW-0378">Hydrolase</keyword>
<keyword id="KW-0460">Magnesium</keyword>
<keyword id="KW-0479">Metal-binding</keyword>
<keyword id="KW-0540">Nuclease</keyword>
<keyword id="KW-1185">Reference proteome</keyword>
<feature type="chain" id="PRO_1000016736" description="Holliday junction resolvase RecU">
    <location>
        <begin position="1"/>
        <end position="196"/>
    </location>
</feature>
<feature type="binding site" evidence="1">
    <location>
        <position position="82"/>
    </location>
    <ligand>
        <name>Mg(2+)</name>
        <dbReference type="ChEBI" id="CHEBI:18420"/>
    </ligand>
</feature>
<feature type="binding site" evidence="1">
    <location>
        <position position="84"/>
    </location>
    <ligand>
        <name>Mg(2+)</name>
        <dbReference type="ChEBI" id="CHEBI:18420"/>
    </ligand>
</feature>
<feature type="binding site" evidence="1">
    <location>
        <position position="97"/>
    </location>
    <ligand>
        <name>Mg(2+)</name>
        <dbReference type="ChEBI" id="CHEBI:18420"/>
    </ligand>
</feature>
<feature type="binding site" evidence="1">
    <location>
        <position position="116"/>
    </location>
    <ligand>
        <name>Mg(2+)</name>
        <dbReference type="ChEBI" id="CHEBI:18420"/>
    </ligand>
</feature>
<feature type="site" description="Transition state stabilizer" evidence="1">
    <location>
        <position position="99"/>
    </location>
</feature>
<gene>
    <name evidence="1" type="primary">recU</name>
    <name type="ordered locus">OB1755</name>
</gene>